<gene>
    <name evidence="1" type="primary">acpS</name>
    <name type="ordered locus">Anae109_2332</name>
</gene>
<keyword id="KW-0963">Cytoplasm</keyword>
<keyword id="KW-0275">Fatty acid biosynthesis</keyword>
<keyword id="KW-0276">Fatty acid metabolism</keyword>
<keyword id="KW-0444">Lipid biosynthesis</keyword>
<keyword id="KW-0443">Lipid metabolism</keyword>
<keyword id="KW-0460">Magnesium</keyword>
<keyword id="KW-0479">Metal-binding</keyword>
<keyword id="KW-1185">Reference proteome</keyword>
<keyword id="KW-0808">Transferase</keyword>
<accession>A7HCT8</accession>
<evidence type="ECO:0000255" key="1">
    <source>
        <dbReference type="HAMAP-Rule" id="MF_00101"/>
    </source>
</evidence>
<protein>
    <recommendedName>
        <fullName evidence="1">Holo-[acyl-carrier-protein] synthase</fullName>
        <shortName evidence="1">Holo-ACP synthase</shortName>
        <ecNumber evidence="1">2.7.8.7</ecNumber>
    </recommendedName>
    <alternativeName>
        <fullName evidence="1">4'-phosphopantetheinyl transferase AcpS</fullName>
    </alternativeName>
</protein>
<proteinExistence type="inferred from homology"/>
<reference key="1">
    <citation type="journal article" date="2015" name="Genome Announc.">
        <title>Complete genome sequence of Anaeromyxobacter sp. Fw109-5, an anaerobic, metal-reducing bacterium isolated from a contaminated subsurface environment.</title>
        <authorList>
            <person name="Hwang C."/>
            <person name="Copeland A."/>
            <person name="Lucas S."/>
            <person name="Lapidus A."/>
            <person name="Barry K."/>
            <person name="Glavina Del Rio T."/>
            <person name="Dalin E."/>
            <person name="Tice H."/>
            <person name="Pitluck S."/>
            <person name="Sims D."/>
            <person name="Brettin T."/>
            <person name="Bruce D.C."/>
            <person name="Detter J.C."/>
            <person name="Han C.S."/>
            <person name="Schmutz J."/>
            <person name="Larimer F.W."/>
            <person name="Land M.L."/>
            <person name="Hauser L.J."/>
            <person name="Kyrpides N."/>
            <person name="Lykidis A."/>
            <person name="Richardson P."/>
            <person name="Belieav A."/>
            <person name="Sanford R.A."/>
            <person name="Loeffler F.E."/>
            <person name="Fields M.W."/>
        </authorList>
    </citation>
    <scope>NUCLEOTIDE SEQUENCE [LARGE SCALE GENOMIC DNA]</scope>
    <source>
        <strain>Fw109-5</strain>
    </source>
</reference>
<sequence>MILGLGMDVVEVARIERILAGPPARVDRFLERCFTARERAYCDAARDRATRYAARFAAKEAASKALGAPAGIRFTDVEVVRGAGAPVLELAGVAATAAARLGVRRVLVTLTHDGGVAAATVVLDGEEAR</sequence>
<dbReference type="EC" id="2.7.8.7" evidence="1"/>
<dbReference type="EMBL" id="CP000769">
    <property type="protein sequence ID" value="ABS26534.1"/>
    <property type="molecule type" value="Genomic_DNA"/>
</dbReference>
<dbReference type="RefSeq" id="WP_012097120.1">
    <property type="nucleotide sequence ID" value="NC_009675.1"/>
</dbReference>
<dbReference type="SMR" id="A7HCT8"/>
<dbReference type="STRING" id="404589.Anae109_2332"/>
<dbReference type="KEGG" id="afw:Anae109_2332"/>
<dbReference type="eggNOG" id="COG0736">
    <property type="taxonomic scope" value="Bacteria"/>
</dbReference>
<dbReference type="HOGENOM" id="CLU_089696_0_2_7"/>
<dbReference type="OrthoDB" id="517356at2"/>
<dbReference type="Proteomes" id="UP000006382">
    <property type="component" value="Chromosome"/>
</dbReference>
<dbReference type="GO" id="GO:0005737">
    <property type="term" value="C:cytoplasm"/>
    <property type="evidence" value="ECO:0007669"/>
    <property type="project" value="UniProtKB-SubCell"/>
</dbReference>
<dbReference type="GO" id="GO:0008897">
    <property type="term" value="F:holo-[acyl-carrier-protein] synthase activity"/>
    <property type="evidence" value="ECO:0007669"/>
    <property type="project" value="UniProtKB-UniRule"/>
</dbReference>
<dbReference type="GO" id="GO:0000287">
    <property type="term" value="F:magnesium ion binding"/>
    <property type="evidence" value="ECO:0007669"/>
    <property type="project" value="UniProtKB-UniRule"/>
</dbReference>
<dbReference type="GO" id="GO:0006633">
    <property type="term" value="P:fatty acid biosynthetic process"/>
    <property type="evidence" value="ECO:0007669"/>
    <property type="project" value="UniProtKB-UniRule"/>
</dbReference>
<dbReference type="Gene3D" id="3.90.470.20">
    <property type="entry name" value="4'-phosphopantetheinyl transferase domain"/>
    <property type="match status" value="1"/>
</dbReference>
<dbReference type="HAMAP" id="MF_00101">
    <property type="entry name" value="AcpS"/>
    <property type="match status" value="1"/>
</dbReference>
<dbReference type="InterPro" id="IPR008278">
    <property type="entry name" value="4-PPantetheinyl_Trfase_dom"/>
</dbReference>
<dbReference type="InterPro" id="IPR037143">
    <property type="entry name" value="4-PPantetheinyl_Trfase_dom_sf"/>
</dbReference>
<dbReference type="InterPro" id="IPR002582">
    <property type="entry name" value="ACPS"/>
</dbReference>
<dbReference type="InterPro" id="IPR004568">
    <property type="entry name" value="Ppantetheine-prot_Trfase_dom"/>
</dbReference>
<dbReference type="NCBIfam" id="TIGR00516">
    <property type="entry name" value="acpS"/>
    <property type="match status" value="1"/>
</dbReference>
<dbReference type="NCBIfam" id="TIGR00556">
    <property type="entry name" value="pantethn_trn"/>
    <property type="match status" value="1"/>
</dbReference>
<dbReference type="NCBIfam" id="NF000832">
    <property type="entry name" value="PRK00070.3-2"/>
    <property type="match status" value="1"/>
</dbReference>
<dbReference type="Pfam" id="PF01648">
    <property type="entry name" value="ACPS"/>
    <property type="match status" value="1"/>
</dbReference>
<dbReference type="SUPFAM" id="SSF56214">
    <property type="entry name" value="4'-phosphopantetheinyl transferase"/>
    <property type="match status" value="1"/>
</dbReference>
<name>ACPS_ANADF</name>
<comment type="function">
    <text evidence="1">Transfers the 4'-phosphopantetheine moiety from coenzyme A to a Ser of acyl-carrier-protein.</text>
</comment>
<comment type="catalytic activity">
    <reaction evidence="1">
        <text>apo-[ACP] + CoA = holo-[ACP] + adenosine 3',5'-bisphosphate + H(+)</text>
        <dbReference type="Rhea" id="RHEA:12068"/>
        <dbReference type="Rhea" id="RHEA-COMP:9685"/>
        <dbReference type="Rhea" id="RHEA-COMP:9690"/>
        <dbReference type="ChEBI" id="CHEBI:15378"/>
        <dbReference type="ChEBI" id="CHEBI:29999"/>
        <dbReference type="ChEBI" id="CHEBI:57287"/>
        <dbReference type="ChEBI" id="CHEBI:58343"/>
        <dbReference type="ChEBI" id="CHEBI:64479"/>
        <dbReference type="EC" id="2.7.8.7"/>
    </reaction>
</comment>
<comment type="cofactor">
    <cofactor evidence="1">
        <name>Mg(2+)</name>
        <dbReference type="ChEBI" id="CHEBI:18420"/>
    </cofactor>
</comment>
<comment type="subcellular location">
    <subcellularLocation>
        <location evidence="1">Cytoplasm</location>
    </subcellularLocation>
</comment>
<comment type="similarity">
    <text evidence="1">Belongs to the P-Pant transferase superfamily. AcpS family.</text>
</comment>
<feature type="chain" id="PRO_1000008380" description="Holo-[acyl-carrier-protein] synthase">
    <location>
        <begin position="1"/>
        <end position="129"/>
    </location>
</feature>
<feature type="binding site" evidence="1">
    <location>
        <position position="8"/>
    </location>
    <ligand>
        <name>Mg(2+)</name>
        <dbReference type="ChEBI" id="CHEBI:18420"/>
    </ligand>
</feature>
<feature type="binding site" evidence="1">
    <location>
        <position position="60"/>
    </location>
    <ligand>
        <name>Mg(2+)</name>
        <dbReference type="ChEBI" id="CHEBI:18420"/>
    </ligand>
</feature>
<organism>
    <name type="scientific">Anaeromyxobacter sp. (strain Fw109-5)</name>
    <dbReference type="NCBI Taxonomy" id="404589"/>
    <lineage>
        <taxon>Bacteria</taxon>
        <taxon>Pseudomonadati</taxon>
        <taxon>Myxococcota</taxon>
        <taxon>Myxococcia</taxon>
        <taxon>Myxococcales</taxon>
        <taxon>Cystobacterineae</taxon>
        <taxon>Anaeromyxobacteraceae</taxon>
        <taxon>Anaeromyxobacter</taxon>
    </lineage>
</organism>